<sequence length="153" mass="17558">AEEAPRRVKLSQRQMQELKEAFTMIDQDRDGFIGMEDLKDMFSSLGRVPPDDELNAMLKECPGQLNFTAFLTLFGEKVSGTDPEDALRNAFSMFDEDGQGFIPEDYLKDLLENMGDNFSKEEIKNVWKDAPLKNKQFNYNKMVDIKGKAEDED</sequence>
<protein>
    <recommendedName>
        <fullName>Myosin regulatory light chain LC-2, mantle muscle</fullName>
        <shortName>RLC</shortName>
    </recommendedName>
</protein>
<reference key="1">
    <citation type="journal article" date="1987" name="J. Biochem.">
        <title>Amino acid sequence of the regulatory light chain of squid mantle muscle myosin.</title>
        <authorList>
            <person name="Maita T."/>
            <person name="Tanaka H."/>
            <person name="Konno K."/>
            <person name="Matsuda G."/>
        </authorList>
    </citation>
    <scope>PROTEIN SEQUENCE</scope>
</reference>
<accession>P08052</accession>
<organism>
    <name type="scientific">Todarodes pacificus</name>
    <name type="common">Japanese flying squid</name>
    <name type="synonym">Ommastrephes pacificus</name>
    <dbReference type="NCBI Taxonomy" id="6637"/>
    <lineage>
        <taxon>Eukaryota</taxon>
        <taxon>Metazoa</taxon>
        <taxon>Spiralia</taxon>
        <taxon>Lophotrochozoa</taxon>
        <taxon>Mollusca</taxon>
        <taxon>Cephalopoda</taxon>
        <taxon>Coleoidea</taxon>
        <taxon>Decapodiformes</taxon>
        <taxon>Oegopsida</taxon>
        <taxon>Ommastrephidae</taxon>
        <taxon>Todarodes</taxon>
    </lineage>
</organism>
<keyword id="KW-0002">3D-structure</keyword>
<keyword id="KW-0106">Calcium</keyword>
<keyword id="KW-0903">Direct protein sequencing</keyword>
<keyword id="KW-0479">Metal-binding</keyword>
<keyword id="KW-0505">Motor protein</keyword>
<keyword id="KW-0514">Muscle protein</keyword>
<keyword id="KW-0518">Myosin</keyword>
<keyword id="KW-0677">Repeat</keyword>
<comment type="function">
    <text>In molluscan muscle, calcium regulation is associated with myosin rather than with actin. Muscle myosin contains two types of light chains: the catalytic light chain, essential for ATPase activity, and the regulatory light chain, a calcium-binding protein responsible for Ca(2+) dependent binding and Ca(2+) dependent Mg-ATPase activity.</text>
</comment>
<comment type="miscellaneous">
    <text>This chain binds calcium.</text>
</comment>
<evidence type="ECO:0000255" key="1">
    <source>
        <dbReference type="PROSITE-ProRule" id="PRU00448"/>
    </source>
</evidence>
<evidence type="ECO:0007829" key="2">
    <source>
        <dbReference type="PDB" id="3I5F"/>
    </source>
</evidence>
<evidence type="ECO:0007829" key="3">
    <source>
        <dbReference type="PDB" id="3I5G"/>
    </source>
</evidence>
<proteinExistence type="evidence at protein level"/>
<name>MLR_TODPA</name>
<dbReference type="PIR" id="A41510">
    <property type="entry name" value="A41510"/>
</dbReference>
<dbReference type="PDB" id="3I5F">
    <property type="method" value="X-ray"/>
    <property type="resolution" value="3.10 A"/>
    <property type="chains" value="B=1-153"/>
</dbReference>
<dbReference type="PDB" id="3I5G">
    <property type="method" value="X-ray"/>
    <property type="resolution" value="2.60 A"/>
    <property type="chains" value="B=1-153"/>
</dbReference>
<dbReference type="PDB" id="3I5H">
    <property type="method" value="X-ray"/>
    <property type="resolution" value="3.40 A"/>
    <property type="chains" value="B=1-153"/>
</dbReference>
<dbReference type="PDB" id="3I5I">
    <property type="method" value="X-ray"/>
    <property type="resolution" value="3.30 A"/>
    <property type="chains" value="B=1-153"/>
</dbReference>
<dbReference type="PDBsum" id="3I5F"/>
<dbReference type="PDBsum" id="3I5G"/>
<dbReference type="PDBsum" id="3I5H"/>
<dbReference type="PDBsum" id="3I5I"/>
<dbReference type="SMR" id="P08052"/>
<dbReference type="EvolutionaryTrace" id="P08052"/>
<dbReference type="GO" id="GO:0016459">
    <property type="term" value="C:myosin complex"/>
    <property type="evidence" value="ECO:0007669"/>
    <property type="project" value="UniProtKB-KW"/>
</dbReference>
<dbReference type="GO" id="GO:0005509">
    <property type="term" value="F:calcium ion binding"/>
    <property type="evidence" value="ECO:0007669"/>
    <property type="project" value="InterPro"/>
</dbReference>
<dbReference type="FunFam" id="1.10.238.10:FF:000007">
    <property type="entry name" value="Putative myosin regulatory light chain sqh"/>
    <property type="match status" value="1"/>
</dbReference>
<dbReference type="Gene3D" id="1.10.238.10">
    <property type="entry name" value="EF-hand"/>
    <property type="match status" value="2"/>
</dbReference>
<dbReference type="InterPro" id="IPR011992">
    <property type="entry name" value="EF-hand-dom_pair"/>
</dbReference>
<dbReference type="InterPro" id="IPR018247">
    <property type="entry name" value="EF_Hand_1_Ca_BS"/>
</dbReference>
<dbReference type="InterPro" id="IPR002048">
    <property type="entry name" value="EF_hand_dom"/>
</dbReference>
<dbReference type="InterPro" id="IPR050403">
    <property type="entry name" value="Myosin_RLC"/>
</dbReference>
<dbReference type="PANTHER" id="PTHR23049">
    <property type="entry name" value="MYOSIN REGULATORY LIGHT CHAIN 2"/>
    <property type="match status" value="1"/>
</dbReference>
<dbReference type="Pfam" id="PF13499">
    <property type="entry name" value="EF-hand_7"/>
    <property type="match status" value="2"/>
</dbReference>
<dbReference type="SMART" id="SM00054">
    <property type="entry name" value="EFh"/>
    <property type="match status" value="2"/>
</dbReference>
<dbReference type="SUPFAM" id="SSF47473">
    <property type="entry name" value="EF-hand"/>
    <property type="match status" value="1"/>
</dbReference>
<dbReference type="PROSITE" id="PS00018">
    <property type="entry name" value="EF_HAND_1"/>
    <property type="match status" value="1"/>
</dbReference>
<dbReference type="PROSITE" id="PS50222">
    <property type="entry name" value="EF_HAND_2"/>
    <property type="match status" value="2"/>
</dbReference>
<feature type="chain" id="PRO_0000198757" description="Myosin regulatory light chain LC-2, mantle muscle">
    <location>
        <begin position="1"/>
        <end position="153"/>
    </location>
</feature>
<feature type="domain" description="EF-hand 1" evidence="1">
    <location>
        <begin position="13"/>
        <end position="48"/>
    </location>
</feature>
<feature type="domain" description="EF-hand 2" evidence="1">
    <location>
        <begin position="82"/>
        <end position="117"/>
    </location>
</feature>
<feature type="binding site" evidence="1">
    <location>
        <position position="26"/>
    </location>
    <ligand>
        <name>Ca(2+)</name>
        <dbReference type="ChEBI" id="CHEBI:29108"/>
    </ligand>
</feature>
<feature type="binding site" evidence="1">
    <location>
        <position position="28"/>
    </location>
    <ligand>
        <name>Ca(2+)</name>
        <dbReference type="ChEBI" id="CHEBI:29108"/>
    </ligand>
</feature>
<feature type="binding site" evidence="1">
    <location>
        <position position="30"/>
    </location>
    <ligand>
        <name>Ca(2+)</name>
        <dbReference type="ChEBI" id="CHEBI:29108"/>
    </ligand>
</feature>
<feature type="binding site" evidence="1">
    <location>
        <position position="37"/>
    </location>
    <ligand>
        <name>Ca(2+)</name>
        <dbReference type="ChEBI" id="CHEBI:29108"/>
    </ligand>
</feature>
<feature type="modified residue" description="Blocked amino end (Ala)">
    <location>
        <position position="1"/>
    </location>
</feature>
<feature type="helix" evidence="3">
    <location>
        <begin position="12"/>
        <end position="25"/>
    </location>
</feature>
<feature type="turn" evidence="2">
    <location>
        <begin position="30"/>
        <end position="32"/>
    </location>
</feature>
<feature type="helix" evidence="3">
    <location>
        <begin position="35"/>
        <end position="44"/>
    </location>
</feature>
<feature type="helix" evidence="3">
    <location>
        <begin position="51"/>
        <end position="59"/>
    </location>
</feature>
<feature type="strand" evidence="3">
    <location>
        <begin position="61"/>
        <end position="63"/>
    </location>
</feature>
<feature type="helix" evidence="3">
    <location>
        <begin position="68"/>
        <end position="72"/>
    </location>
</feature>
<feature type="turn" evidence="3">
    <location>
        <begin position="73"/>
        <end position="80"/>
    </location>
</feature>
<feature type="helix" evidence="3">
    <location>
        <begin position="84"/>
        <end position="92"/>
    </location>
</feature>
<feature type="strand" evidence="2">
    <location>
        <begin position="97"/>
        <end position="101"/>
    </location>
</feature>
<feature type="helix" evidence="3">
    <location>
        <begin position="104"/>
        <end position="112"/>
    </location>
</feature>
<feature type="strand" evidence="3">
    <location>
        <begin position="113"/>
        <end position="116"/>
    </location>
</feature>
<feature type="helix" evidence="3">
    <location>
        <begin position="120"/>
        <end position="127"/>
    </location>
</feature>
<feature type="helix" evidence="3">
    <location>
        <begin position="139"/>
        <end position="147"/>
    </location>
</feature>